<sequence length="208" mass="22533">MKIVEVKHPLVKHKLGLMREQDISTKRFRELASEVGSLLTYEATADLETEKVTIEGWNGPVEIDQIKGKKITVVPILRAGLGMMDGVLENVPSARISVVGMYRNEETLEPVPYFQKLVSNIDERMALIVDPMLATGGSVIATIDLLKKAGCSSIKVLVLVAAPEGIAALEKAHPDVELYTASIDQGLNEHGYIIPGLGDAGDKIFGTK</sequence>
<organism>
    <name type="scientific">Escherichia coli O8 (strain IAI1)</name>
    <dbReference type="NCBI Taxonomy" id="585034"/>
    <lineage>
        <taxon>Bacteria</taxon>
        <taxon>Pseudomonadati</taxon>
        <taxon>Pseudomonadota</taxon>
        <taxon>Gammaproteobacteria</taxon>
        <taxon>Enterobacterales</taxon>
        <taxon>Enterobacteriaceae</taxon>
        <taxon>Escherichia</taxon>
    </lineage>
</organism>
<accession>B7M7K2</accession>
<feature type="chain" id="PRO_1000139120" description="Uracil phosphoribosyltransferase">
    <location>
        <begin position="1"/>
        <end position="208"/>
    </location>
</feature>
<feature type="binding site" evidence="1">
    <location>
        <position position="78"/>
    </location>
    <ligand>
        <name>5-phospho-alpha-D-ribose 1-diphosphate</name>
        <dbReference type="ChEBI" id="CHEBI:58017"/>
    </ligand>
</feature>
<feature type="binding site" evidence="1">
    <location>
        <position position="103"/>
    </location>
    <ligand>
        <name>5-phospho-alpha-D-ribose 1-diphosphate</name>
        <dbReference type="ChEBI" id="CHEBI:58017"/>
    </ligand>
</feature>
<feature type="binding site" evidence="1">
    <location>
        <begin position="130"/>
        <end position="138"/>
    </location>
    <ligand>
        <name>5-phospho-alpha-D-ribose 1-diphosphate</name>
        <dbReference type="ChEBI" id="CHEBI:58017"/>
    </ligand>
</feature>
<feature type="binding site" evidence="1">
    <location>
        <position position="193"/>
    </location>
    <ligand>
        <name>uracil</name>
        <dbReference type="ChEBI" id="CHEBI:17568"/>
    </ligand>
</feature>
<feature type="binding site" evidence="1">
    <location>
        <begin position="198"/>
        <end position="200"/>
    </location>
    <ligand>
        <name>uracil</name>
        <dbReference type="ChEBI" id="CHEBI:17568"/>
    </ligand>
</feature>
<feature type="binding site" evidence="1">
    <location>
        <position position="199"/>
    </location>
    <ligand>
        <name>5-phospho-alpha-D-ribose 1-diphosphate</name>
        <dbReference type="ChEBI" id="CHEBI:58017"/>
    </ligand>
</feature>
<evidence type="ECO:0000255" key="1">
    <source>
        <dbReference type="HAMAP-Rule" id="MF_01218"/>
    </source>
</evidence>
<reference key="1">
    <citation type="journal article" date="2009" name="PLoS Genet.">
        <title>Organised genome dynamics in the Escherichia coli species results in highly diverse adaptive paths.</title>
        <authorList>
            <person name="Touchon M."/>
            <person name="Hoede C."/>
            <person name="Tenaillon O."/>
            <person name="Barbe V."/>
            <person name="Baeriswyl S."/>
            <person name="Bidet P."/>
            <person name="Bingen E."/>
            <person name="Bonacorsi S."/>
            <person name="Bouchier C."/>
            <person name="Bouvet O."/>
            <person name="Calteau A."/>
            <person name="Chiapello H."/>
            <person name="Clermont O."/>
            <person name="Cruveiller S."/>
            <person name="Danchin A."/>
            <person name="Diard M."/>
            <person name="Dossat C."/>
            <person name="Karoui M.E."/>
            <person name="Frapy E."/>
            <person name="Garry L."/>
            <person name="Ghigo J.M."/>
            <person name="Gilles A.M."/>
            <person name="Johnson J."/>
            <person name="Le Bouguenec C."/>
            <person name="Lescat M."/>
            <person name="Mangenot S."/>
            <person name="Martinez-Jehanne V."/>
            <person name="Matic I."/>
            <person name="Nassif X."/>
            <person name="Oztas S."/>
            <person name="Petit M.A."/>
            <person name="Pichon C."/>
            <person name="Rouy Z."/>
            <person name="Ruf C.S."/>
            <person name="Schneider D."/>
            <person name="Tourret J."/>
            <person name="Vacherie B."/>
            <person name="Vallenet D."/>
            <person name="Medigue C."/>
            <person name="Rocha E.P.C."/>
            <person name="Denamur E."/>
        </authorList>
    </citation>
    <scope>NUCLEOTIDE SEQUENCE [LARGE SCALE GENOMIC DNA]</scope>
    <source>
        <strain>IAI1</strain>
    </source>
</reference>
<name>UPP_ECO8A</name>
<gene>
    <name evidence="1" type="primary">upp</name>
    <name type="ordered locus">ECIAI1_2550</name>
</gene>
<keyword id="KW-0021">Allosteric enzyme</keyword>
<keyword id="KW-0328">Glycosyltransferase</keyword>
<keyword id="KW-0342">GTP-binding</keyword>
<keyword id="KW-0460">Magnesium</keyword>
<keyword id="KW-0547">Nucleotide-binding</keyword>
<keyword id="KW-0808">Transferase</keyword>
<protein>
    <recommendedName>
        <fullName evidence="1">Uracil phosphoribosyltransferase</fullName>
        <ecNumber evidence="1">2.4.2.9</ecNumber>
    </recommendedName>
    <alternativeName>
        <fullName evidence="1">UMP pyrophosphorylase</fullName>
    </alternativeName>
    <alternativeName>
        <fullName evidence="1">UPRTase</fullName>
    </alternativeName>
</protein>
<comment type="function">
    <text evidence="1">Catalyzes the conversion of uracil and 5-phospho-alpha-D-ribose 1-diphosphate (PRPP) to UMP and diphosphate.</text>
</comment>
<comment type="catalytic activity">
    <reaction evidence="1">
        <text>UMP + diphosphate = 5-phospho-alpha-D-ribose 1-diphosphate + uracil</text>
        <dbReference type="Rhea" id="RHEA:13017"/>
        <dbReference type="ChEBI" id="CHEBI:17568"/>
        <dbReference type="ChEBI" id="CHEBI:33019"/>
        <dbReference type="ChEBI" id="CHEBI:57865"/>
        <dbReference type="ChEBI" id="CHEBI:58017"/>
        <dbReference type="EC" id="2.4.2.9"/>
    </reaction>
</comment>
<comment type="cofactor">
    <cofactor evidence="1">
        <name>Mg(2+)</name>
        <dbReference type="ChEBI" id="CHEBI:18420"/>
    </cofactor>
    <text evidence="1">Binds 1 Mg(2+) ion per subunit. The magnesium is bound as Mg-PRPP.</text>
</comment>
<comment type="activity regulation">
    <text evidence="1">Allosterically activated by GTP.</text>
</comment>
<comment type="pathway">
    <text evidence="1">Pyrimidine metabolism; UMP biosynthesis via salvage pathway; UMP from uracil: step 1/1.</text>
</comment>
<comment type="similarity">
    <text evidence="1">Belongs to the UPRTase family.</text>
</comment>
<proteinExistence type="inferred from homology"/>
<dbReference type="EC" id="2.4.2.9" evidence="1"/>
<dbReference type="EMBL" id="CU928160">
    <property type="protein sequence ID" value="CAQ99390.1"/>
    <property type="molecule type" value="Genomic_DNA"/>
</dbReference>
<dbReference type="RefSeq" id="WP_001295473.1">
    <property type="nucleotide sequence ID" value="NC_011741.1"/>
</dbReference>
<dbReference type="SMR" id="B7M7K2"/>
<dbReference type="GeneID" id="93774638"/>
<dbReference type="KEGG" id="ecr:ECIAI1_2550"/>
<dbReference type="HOGENOM" id="CLU_067096_2_2_6"/>
<dbReference type="UniPathway" id="UPA00574">
    <property type="reaction ID" value="UER00636"/>
</dbReference>
<dbReference type="GO" id="GO:0005525">
    <property type="term" value="F:GTP binding"/>
    <property type="evidence" value="ECO:0007669"/>
    <property type="project" value="UniProtKB-KW"/>
</dbReference>
<dbReference type="GO" id="GO:0000287">
    <property type="term" value="F:magnesium ion binding"/>
    <property type="evidence" value="ECO:0007669"/>
    <property type="project" value="UniProtKB-UniRule"/>
</dbReference>
<dbReference type="GO" id="GO:0004845">
    <property type="term" value="F:uracil phosphoribosyltransferase activity"/>
    <property type="evidence" value="ECO:0007669"/>
    <property type="project" value="UniProtKB-UniRule"/>
</dbReference>
<dbReference type="GO" id="GO:0044206">
    <property type="term" value="P:UMP salvage"/>
    <property type="evidence" value="ECO:0007669"/>
    <property type="project" value="UniProtKB-UniRule"/>
</dbReference>
<dbReference type="GO" id="GO:0006223">
    <property type="term" value="P:uracil salvage"/>
    <property type="evidence" value="ECO:0007669"/>
    <property type="project" value="InterPro"/>
</dbReference>
<dbReference type="CDD" id="cd06223">
    <property type="entry name" value="PRTases_typeI"/>
    <property type="match status" value="1"/>
</dbReference>
<dbReference type="FunFam" id="3.40.50.2020:FF:000003">
    <property type="entry name" value="Uracil phosphoribosyltransferase"/>
    <property type="match status" value="1"/>
</dbReference>
<dbReference type="Gene3D" id="3.40.50.2020">
    <property type="match status" value="1"/>
</dbReference>
<dbReference type="HAMAP" id="MF_01218_B">
    <property type="entry name" value="Upp_B"/>
    <property type="match status" value="1"/>
</dbReference>
<dbReference type="InterPro" id="IPR000836">
    <property type="entry name" value="PRibTrfase_dom"/>
</dbReference>
<dbReference type="InterPro" id="IPR029057">
    <property type="entry name" value="PRTase-like"/>
</dbReference>
<dbReference type="InterPro" id="IPR034332">
    <property type="entry name" value="Upp_B"/>
</dbReference>
<dbReference type="InterPro" id="IPR050054">
    <property type="entry name" value="UPRTase/APRTase"/>
</dbReference>
<dbReference type="InterPro" id="IPR005765">
    <property type="entry name" value="Ura_phspho_trans"/>
</dbReference>
<dbReference type="NCBIfam" id="NF001097">
    <property type="entry name" value="PRK00129.1"/>
    <property type="match status" value="1"/>
</dbReference>
<dbReference type="NCBIfam" id="TIGR01091">
    <property type="entry name" value="upp"/>
    <property type="match status" value="1"/>
</dbReference>
<dbReference type="PANTHER" id="PTHR32315">
    <property type="entry name" value="ADENINE PHOSPHORIBOSYLTRANSFERASE"/>
    <property type="match status" value="1"/>
</dbReference>
<dbReference type="PANTHER" id="PTHR32315:SF4">
    <property type="entry name" value="URACIL PHOSPHORIBOSYLTRANSFERASE, CHLOROPLASTIC"/>
    <property type="match status" value="1"/>
</dbReference>
<dbReference type="Pfam" id="PF14681">
    <property type="entry name" value="UPRTase"/>
    <property type="match status" value="1"/>
</dbReference>
<dbReference type="SUPFAM" id="SSF53271">
    <property type="entry name" value="PRTase-like"/>
    <property type="match status" value="1"/>
</dbReference>